<accession>Q2IBA5</accession>
<protein>
    <recommendedName>
        <fullName>Caveolin-1</fullName>
    </recommendedName>
</protein>
<evidence type="ECO:0000250" key="1"/>
<evidence type="ECO:0000250" key="2">
    <source>
        <dbReference type="UniProtKB" id="P41350"/>
    </source>
</evidence>
<evidence type="ECO:0000250" key="3">
    <source>
        <dbReference type="UniProtKB" id="P49817"/>
    </source>
</evidence>
<evidence type="ECO:0000250" key="4">
    <source>
        <dbReference type="UniProtKB" id="Q03135"/>
    </source>
</evidence>
<evidence type="ECO:0000255" key="5"/>
<evidence type="ECO:0000269" key="6">
    <source>
    </source>
</evidence>
<evidence type="ECO:0000305" key="7"/>
<feature type="initiator methionine" description="Removed" evidence="4">
    <location>
        <position position="1"/>
    </location>
</feature>
<feature type="chain" id="PRO_0000251903" description="Caveolin-1">
    <location>
        <begin position="2"/>
        <end position="178"/>
    </location>
</feature>
<feature type="topological domain" description="Cytoplasmic" evidence="5">
    <location>
        <begin position="2"/>
        <end position="104"/>
    </location>
</feature>
<feature type="intramembrane region" description="Helical" evidence="5">
    <location>
        <begin position="105"/>
        <end position="125"/>
    </location>
</feature>
<feature type="topological domain" description="Cytoplasmic" evidence="5">
    <location>
        <begin position="126"/>
        <end position="178"/>
    </location>
</feature>
<feature type="region of interest" description="Required for homooligomerization" evidence="4">
    <location>
        <begin position="2"/>
        <end position="94"/>
    </location>
</feature>
<feature type="region of interest" description="Interaction with CAVIN3" evidence="4">
    <location>
        <begin position="82"/>
        <end position="94"/>
    </location>
</feature>
<feature type="region of interest" description="Interacts with SPRY1, SPRY2, SPRY3 and SPRY4" evidence="3">
    <location>
        <begin position="131"/>
        <end position="142"/>
    </location>
</feature>
<feature type="region of interest" description="Interacts with SPRY1, SPRY2, and SPRY4" evidence="3">
    <location>
        <begin position="149"/>
        <end position="160"/>
    </location>
</feature>
<feature type="region of interest" description="Interacts with SPRY1, SPRY2, SPRY3 and SPRY4" evidence="3">
    <location>
        <begin position="167"/>
        <end position="178"/>
    </location>
</feature>
<feature type="modified residue" description="N-acetylserine" evidence="4">
    <location>
        <position position="2"/>
    </location>
</feature>
<feature type="modified residue" description="Phosphoserine" evidence="2">
    <location>
        <position position="2"/>
    </location>
</feature>
<feature type="modified residue" description="N6-acetyllysine; alternate" evidence="4">
    <location>
        <position position="5"/>
    </location>
</feature>
<feature type="modified residue" description="Phosphotyrosine" evidence="4">
    <location>
        <position position="6"/>
    </location>
</feature>
<feature type="modified residue" description="Phosphoserine" evidence="3">
    <location>
        <position position="9"/>
    </location>
</feature>
<feature type="modified residue" description="Phosphotyrosine; by ABL1" evidence="3">
    <location>
        <position position="14"/>
    </location>
</feature>
<feature type="modified residue" description="Phosphotyrosine" evidence="4">
    <location>
        <position position="25"/>
    </location>
</feature>
<feature type="modified residue" description="Phosphoserine" evidence="4">
    <location>
        <position position="37"/>
    </location>
</feature>
<feature type="lipid moiety-binding region" description="S-palmitoyl cysteine" evidence="1">
    <location>
        <position position="133"/>
    </location>
</feature>
<feature type="lipid moiety-binding region" description="S-palmitoyl cysteine" evidence="1">
    <location>
        <position position="143"/>
    </location>
</feature>
<feature type="lipid moiety-binding region" description="S-palmitoyl cysteine" evidence="1">
    <location>
        <position position="156"/>
    </location>
</feature>
<feature type="cross-link" description="Glycyl lysine isopeptide (Lys-Gly) (interchain with G-Cter in ubiquitin); alternate" evidence="4">
    <location>
        <position position="5"/>
    </location>
</feature>
<feature type="cross-link" description="Glycyl lysine isopeptide (Lys-Gly) (interchain with G-Cter in ubiquitin)" evidence="4">
    <location>
        <position position="26"/>
    </location>
</feature>
<feature type="cross-link" description="Glycyl lysine isopeptide (Lys-Gly) (interchain with G-Cter in ubiquitin)" evidence="4">
    <location>
        <position position="30"/>
    </location>
</feature>
<feature type="cross-link" description="Glycyl lysine isopeptide (Lys-Gly) (interchain with G-Cter in ubiquitin)" evidence="4">
    <location>
        <position position="39"/>
    </location>
</feature>
<feature type="cross-link" description="Glycyl lysine isopeptide (Lys-Gly) (interchain with G-Cter in ubiquitin)" evidence="4">
    <location>
        <position position="47"/>
    </location>
</feature>
<feature type="cross-link" description="Glycyl lysine isopeptide (Lys-Gly) (interchain with G-Cter in ubiquitin)" evidence="4">
    <location>
        <position position="57"/>
    </location>
</feature>
<reference key="1">
    <citation type="submission" date="2006-01" db="EMBL/GenBank/DDBJ databases">
        <title>NISC comparative sequencing initiative.</title>
        <authorList>
            <person name="Antonellis A."/>
            <person name="Ayele K."/>
            <person name="Benjamin B."/>
            <person name="Blakesley R.W."/>
            <person name="Boakye A."/>
            <person name="Bouffard G.G."/>
            <person name="Brinkley C."/>
            <person name="Brooks S."/>
            <person name="Chu G."/>
            <person name="Coleman H."/>
            <person name="Engle J."/>
            <person name="Gestole M."/>
            <person name="Greene A."/>
            <person name="Guan X."/>
            <person name="Gupta J."/>
            <person name="Haghighi P."/>
            <person name="Han J."/>
            <person name="Hansen N."/>
            <person name="Ho S.-L."/>
            <person name="Hu P."/>
            <person name="Hunter G."/>
            <person name="Hurle B."/>
            <person name="Idol J.R."/>
            <person name="Kwong P."/>
            <person name="Laric P."/>
            <person name="Larson S."/>
            <person name="Lee-Lin S.-Q."/>
            <person name="Legaspi R."/>
            <person name="Madden M."/>
            <person name="Maduro Q.L."/>
            <person name="Maduro V.B."/>
            <person name="Margulies E.H."/>
            <person name="Masiello C."/>
            <person name="Maskeri B."/>
            <person name="McDowell J."/>
            <person name="Mojidi H.A."/>
            <person name="Mullikin J.C."/>
            <person name="Oestreicher J.S."/>
            <person name="Park M."/>
            <person name="Portnoy M.E."/>
            <person name="Prasad A."/>
            <person name="Puri O."/>
            <person name="Reddix-Dugue N."/>
            <person name="Schandler K."/>
            <person name="Schueler M.G."/>
            <person name="Sison C."/>
            <person name="Stantripop S."/>
            <person name="Stephen E."/>
            <person name="Taye A."/>
            <person name="Thomas J.W."/>
            <person name="Thomas P.J."/>
            <person name="Tsipouri V."/>
            <person name="Ung L."/>
            <person name="Vogt J.L."/>
            <person name="Wetherby K.D."/>
            <person name="Young A."/>
            <person name="Green E.D."/>
        </authorList>
    </citation>
    <scope>NUCLEOTIDE SEQUENCE [LARGE SCALE GENOMIC DNA]</scope>
</reference>
<reference key="2">
    <citation type="journal article" date="2002" name="J. Biol. Chem.">
        <title>A close association of the ganglioside-specific sialidase Neu3 with caveolin in membrane microdomains.</title>
        <authorList>
            <person name="Wang Y."/>
            <person name="Yamaguchi K."/>
            <person name="Wada T."/>
            <person name="Hata K."/>
            <person name="Zhao X."/>
            <person name="Fujimoto T."/>
            <person name="Miyagi T."/>
        </authorList>
    </citation>
    <scope>INTERACTION WITH NEU3</scope>
</reference>
<dbReference type="EMBL" id="DP000029">
    <property type="protein sequence ID" value="ABC87484.1"/>
    <property type="molecule type" value="Genomic_DNA"/>
</dbReference>
<dbReference type="SMR" id="Q2IBA5"/>
<dbReference type="GO" id="GO:0005901">
    <property type="term" value="C:caveola"/>
    <property type="evidence" value="ECO:0000250"/>
    <property type="project" value="UniProtKB"/>
</dbReference>
<dbReference type="GO" id="GO:0005768">
    <property type="term" value="C:endosome"/>
    <property type="evidence" value="ECO:0000250"/>
    <property type="project" value="UniProtKB"/>
</dbReference>
<dbReference type="GO" id="GO:0005925">
    <property type="term" value="C:focal adhesion"/>
    <property type="evidence" value="ECO:0007669"/>
    <property type="project" value="TreeGrafter"/>
</dbReference>
<dbReference type="GO" id="GO:0000139">
    <property type="term" value="C:Golgi membrane"/>
    <property type="evidence" value="ECO:0007669"/>
    <property type="project" value="UniProtKB-SubCell"/>
</dbReference>
<dbReference type="GO" id="GO:0045121">
    <property type="term" value="C:membrane raft"/>
    <property type="evidence" value="ECO:0000250"/>
    <property type="project" value="UniProtKB"/>
</dbReference>
<dbReference type="GO" id="GO:0048471">
    <property type="term" value="C:perinuclear region of cytoplasm"/>
    <property type="evidence" value="ECO:0007669"/>
    <property type="project" value="TreeGrafter"/>
</dbReference>
<dbReference type="GO" id="GO:0042383">
    <property type="term" value="C:sarcolemma"/>
    <property type="evidence" value="ECO:0007669"/>
    <property type="project" value="TreeGrafter"/>
</dbReference>
<dbReference type="GO" id="GO:0060090">
    <property type="term" value="F:molecular adaptor activity"/>
    <property type="evidence" value="ECO:0007669"/>
    <property type="project" value="TreeGrafter"/>
</dbReference>
<dbReference type="GO" id="GO:0008142">
    <property type="term" value="F:oxysterol binding"/>
    <property type="evidence" value="ECO:0000250"/>
    <property type="project" value="UniProtKB"/>
</dbReference>
<dbReference type="GO" id="GO:0019901">
    <property type="term" value="F:protein kinase binding"/>
    <property type="evidence" value="ECO:0007669"/>
    <property type="project" value="TreeGrafter"/>
</dbReference>
<dbReference type="GO" id="GO:0044325">
    <property type="term" value="F:transmembrane transporter binding"/>
    <property type="evidence" value="ECO:0007669"/>
    <property type="project" value="TreeGrafter"/>
</dbReference>
<dbReference type="GO" id="GO:0070836">
    <property type="term" value="P:caveola assembly"/>
    <property type="evidence" value="ECO:0007669"/>
    <property type="project" value="InterPro"/>
</dbReference>
<dbReference type="GO" id="GO:0030154">
    <property type="term" value="P:cell differentiation"/>
    <property type="evidence" value="ECO:0007669"/>
    <property type="project" value="TreeGrafter"/>
</dbReference>
<dbReference type="GO" id="GO:0090090">
    <property type="term" value="P:negative regulation of canonical Wnt signaling pathway"/>
    <property type="evidence" value="ECO:0000250"/>
    <property type="project" value="UniProtKB"/>
</dbReference>
<dbReference type="GO" id="GO:0001937">
    <property type="term" value="P:negative regulation of endothelial cell proliferation"/>
    <property type="evidence" value="ECO:0007669"/>
    <property type="project" value="TreeGrafter"/>
</dbReference>
<dbReference type="GO" id="GO:0000122">
    <property type="term" value="P:negative regulation of transcription by RNA polymerase II"/>
    <property type="evidence" value="ECO:0000250"/>
    <property type="project" value="UniProtKB"/>
</dbReference>
<dbReference type="GO" id="GO:0031623">
    <property type="term" value="P:receptor internalization"/>
    <property type="evidence" value="ECO:0000250"/>
    <property type="project" value="UniProtKB"/>
</dbReference>
<dbReference type="GO" id="GO:0051480">
    <property type="term" value="P:regulation of cytosolic calcium ion concentration"/>
    <property type="evidence" value="ECO:0007669"/>
    <property type="project" value="TreeGrafter"/>
</dbReference>
<dbReference type="GO" id="GO:0031295">
    <property type="term" value="P:T cell costimulation"/>
    <property type="evidence" value="ECO:0000250"/>
    <property type="project" value="UniProtKB"/>
</dbReference>
<dbReference type="InterPro" id="IPR001612">
    <property type="entry name" value="Caveolin"/>
</dbReference>
<dbReference type="InterPro" id="IPR018361">
    <property type="entry name" value="Caveolin_CS"/>
</dbReference>
<dbReference type="PANTHER" id="PTHR10844">
    <property type="entry name" value="CAVEOLIN"/>
    <property type="match status" value="1"/>
</dbReference>
<dbReference type="PANTHER" id="PTHR10844:SF18">
    <property type="entry name" value="CAVEOLIN-1"/>
    <property type="match status" value="1"/>
</dbReference>
<dbReference type="Pfam" id="PF01146">
    <property type="entry name" value="Caveolin"/>
    <property type="match status" value="1"/>
</dbReference>
<dbReference type="PROSITE" id="PS01210">
    <property type="entry name" value="CAVEOLIN"/>
    <property type="match status" value="1"/>
</dbReference>
<name>CAV1_CHLAE</name>
<comment type="function">
    <text evidence="3 4">May act as a scaffolding protein within caveolar membranes. Forms a stable heterooligomeric complex with CAV2 that targets to lipid rafts and drives caveolae formation. Mediates the recruitment of CAVIN proteins (CAVIN1/2/3/4) to the caveolae (By similarity). Interacts directly with G-protein alpha subunits and can functionally regulate their activity (By similarity). Involved in the costimulatory signal essential for T-cell receptor (TCR)-mediated T-cell activation. Its binding to DPP4 induces T-cell proliferation and NF-kappa-B activation in a T-cell receptor/CD3-dependent manner (By similarity). Recruits CTNNB1 to caveolar membranes and may regulate CTNNB1-mediated signaling through the Wnt pathway (By similarity). Negatively regulates TGFB1-mediated activation of SMAD2/3 by mediating the internalization of TGFBR1 from membrane rafts leading to its subsequent degradation (By similarity). Binds 20(S)-hydroxycholesterol (20(S)-OHC) (By similarity).</text>
</comment>
<comment type="subunit">
    <text evidence="2 3 4 6">Homooligomer. Interacts (via the N-terminus) with DPP4; the interaction is direct. Forms a stable heterooligomeric complex with CAV2 that targets to lipid rafts and drives caveolae formation. Interacts with PACSIN2; this interaction induces membrane tubulation (By similarity). Interacts with BMX, BTK, CTNNB1, CDH1, GLIPR2, JUP, NOSTRIN, SNAP25 and STX1A. Interacts with SLC7A9. Interacts with TGFBR1. Interacts with CAVIN3 (via leucine-zipper domain) in a cholesterol-sensitive manner. Interacts with CAVIN1. Interacts with EHD2 in a cholesterol-dependent manner. Forms a ternary complex with UBXN6 and VCP; mediates CAV1 targeting to lysosomes for degradation. Interacts with ABCG1; this interaction regulates ABCG1-mediated cholesterol efflux (By similarity). Interacts with NEU3; this interaction enhances NEU3 sialidase activity within caveola. Interacts (via C-terminus) with SPRY1, SPRY2 (via C-terminus), SPRY3, and SPRY4 (By similarity). Interacts with IGFBP5; this interaction allows trafficking of IGFBP5 from the plasma membrane to the nucleus (By similarity).</text>
</comment>
<comment type="subcellular location">
    <subcellularLocation>
        <location evidence="1">Golgi apparatus membrane</location>
        <topology evidence="1">Peripheral membrane protein</topology>
    </subcellularLocation>
    <subcellularLocation>
        <location evidence="1">Cell membrane</location>
        <topology evidence="1">Peripheral membrane protein</topology>
    </subcellularLocation>
    <subcellularLocation>
        <location evidence="3">Membrane</location>
        <location evidence="3">Caveola</location>
        <topology evidence="1">Peripheral membrane protein</topology>
    </subcellularLocation>
    <subcellularLocation>
        <location evidence="4">Membrane raft</location>
    </subcellularLocation>
    <text evidence="1">Colocalized with DPP4 in membrane rafts. Potential hairpin-like structure in the membrane. Membrane protein of caveolae (By similarity).</text>
</comment>
<comment type="PTM">
    <text evidence="4">Phosphorylated at Tyr-14 by ABL1 in response to oxidative stress.</text>
</comment>
<comment type="PTM">
    <text evidence="4">Ubiquitinated. Undergo monoubiquitination and multi- and/or polyubiquitination. Monoubiquitination of N-terminal lysines promotes integration in a ternary complex with UBXN6 and VCP which promotes oligomeric CAV1 targeting to lysosomes for degradation. Ubiquitinated by ZNRF1; leading to degradation and modulation of the TLR4-mediated immune response.</text>
</comment>
<comment type="similarity">
    <text evidence="7">Belongs to the caveolin family.</text>
</comment>
<gene>
    <name type="primary">CAV1</name>
</gene>
<proteinExistence type="evidence at protein level"/>
<keyword id="KW-0007">Acetylation</keyword>
<keyword id="KW-1003">Cell membrane</keyword>
<keyword id="KW-0333">Golgi apparatus</keyword>
<keyword id="KW-1017">Isopeptide bond</keyword>
<keyword id="KW-0449">Lipoprotein</keyword>
<keyword id="KW-0472">Membrane</keyword>
<keyword id="KW-0564">Palmitate</keyword>
<keyword id="KW-0597">Phosphoprotein</keyword>
<keyword id="KW-0832">Ubl conjugation</keyword>
<organism>
    <name type="scientific">Chlorocebus aethiops</name>
    <name type="common">Green monkey</name>
    <name type="synonym">Cercopithecus aethiops</name>
    <dbReference type="NCBI Taxonomy" id="9534"/>
    <lineage>
        <taxon>Eukaryota</taxon>
        <taxon>Metazoa</taxon>
        <taxon>Chordata</taxon>
        <taxon>Craniata</taxon>
        <taxon>Vertebrata</taxon>
        <taxon>Euteleostomi</taxon>
        <taxon>Mammalia</taxon>
        <taxon>Eutheria</taxon>
        <taxon>Euarchontoglires</taxon>
        <taxon>Primates</taxon>
        <taxon>Haplorrhini</taxon>
        <taxon>Catarrhini</taxon>
        <taxon>Cercopithecidae</taxon>
        <taxon>Cercopithecinae</taxon>
        <taxon>Chlorocebus</taxon>
    </lineage>
</organism>
<sequence length="178" mass="20472">MSGGKYVDSEGHLYTVPIREQGNIYKPNNKAMADELSEKQVYDAHTKEIDLVNRDPKHLNDDVVKIDFEDVIAEPEGTHSFDGIWKASFTTFTVTKYWFYRLLSALFGIPMALIWGIYFAILSFLHIWAVVPCIKSFLIEIQCISRVYSIYVHTVCDPLFEAVGKIFSNVRINLQKEI</sequence>